<evidence type="ECO:0000255" key="1">
    <source>
        <dbReference type="HAMAP-Rule" id="MF_00114"/>
    </source>
</evidence>
<comment type="function">
    <text evidence="1">Catalyzes a reversible aldol reaction between acetaldehyde and D-glyceraldehyde 3-phosphate to generate 2-deoxy-D-ribose 5-phosphate.</text>
</comment>
<comment type="catalytic activity">
    <reaction evidence="1">
        <text>2-deoxy-D-ribose 5-phosphate = D-glyceraldehyde 3-phosphate + acetaldehyde</text>
        <dbReference type="Rhea" id="RHEA:12821"/>
        <dbReference type="ChEBI" id="CHEBI:15343"/>
        <dbReference type="ChEBI" id="CHEBI:59776"/>
        <dbReference type="ChEBI" id="CHEBI:62877"/>
        <dbReference type="EC" id="4.1.2.4"/>
    </reaction>
</comment>
<comment type="pathway">
    <text evidence="1">Carbohydrate degradation; 2-deoxy-D-ribose 1-phosphate degradation; D-glyceraldehyde 3-phosphate and acetaldehyde from 2-deoxy-alpha-D-ribose 1-phosphate: step 2/2.</text>
</comment>
<comment type="subcellular location">
    <subcellularLocation>
        <location evidence="1">Cytoplasm</location>
    </subcellularLocation>
</comment>
<comment type="similarity">
    <text evidence="1">Belongs to the DeoC/FbaB aldolase family. DeoC type 1 subfamily.</text>
</comment>
<gene>
    <name evidence="1" type="primary">deoC</name>
    <name type="ordered locus">NP_3200A</name>
</gene>
<reference key="1">
    <citation type="journal article" date="2005" name="Genome Res.">
        <title>Living with two extremes: conclusions from the genome sequence of Natronomonas pharaonis.</title>
        <authorList>
            <person name="Falb M."/>
            <person name="Pfeiffer F."/>
            <person name="Palm P."/>
            <person name="Rodewald K."/>
            <person name="Hickmann V."/>
            <person name="Tittor J."/>
            <person name="Oesterhelt D."/>
        </authorList>
    </citation>
    <scope>NUCLEOTIDE SEQUENCE [LARGE SCALE GENOMIC DNA]</scope>
    <source>
        <strain>ATCC 35678 / DSM 2160 / CIP 103997 / JCM 8858 / NBRC 14720 / NCIMB 2260 / Gabara</strain>
    </source>
</reference>
<keyword id="KW-0963">Cytoplasm</keyword>
<keyword id="KW-0456">Lyase</keyword>
<keyword id="KW-1185">Reference proteome</keyword>
<keyword id="KW-0704">Schiff base</keyword>
<feature type="chain" id="PRO_0000231575" description="Deoxyribose-phosphate aldolase">
    <location>
        <begin position="1"/>
        <end position="215"/>
    </location>
</feature>
<feature type="active site" description="Proton donor/acceptor" evidence="1">
    <location>
        <position position="89"/>
    </location>
</feature>
<feature type="active site" description="Schiff-base intermediate with acetaldehyde" evidence="1">
    <location>
        <position position="150"/>
    </location>
</feature>
<feature type="active site" description="Proton donor/acceptor" evidence="1">
    <location>
        <position position="174"/>
    </location>
</feature>
<dbReference type="EC" id="4.1.2.4" evidence="1"/>
<dbReference type="EMBL" id="CR936257">
    <property type="protein sequence ID" value="CAI49691.1"/>
    <property type="molecule type" value="Genomic_DNA"/>
</dbReference>
<dbReference type="RefSeq" id="WP_011323313.1">
    <property type="nucleotide sequence ID" value="NC_007426.1"/>
</dbReference>
<dbReference type="SMR" id="Q3IQA5"/>
<dbReference type="STRING" id="348780.NP_3200A"/>
<dbReference type="EnsemblBacteria" id="CAI49691">
    <property type="protein sequence ID" value="CAI49691"/>
    <property type="gene ID" value="NP_3200A"/>
</dbReference>
<dbReference type="GeneID" id="3702663"/>
<dbReference type="KEGG" id="nph:NP_3200A"/>
<dbReference type="eggNOG" id="arCOG04320">
    <property type="taxonomic scope" value="Archaea"/>
</dbReference>
<dbReference type="HOGENOM" id="CLU_053595_0_0_2"/>
<dbReference type="OrthoDB" id="31145at2157"/>
<dbReference type="UniPathway" id="UPA00002">
    <property type="reaction ID" value="UER00468"/>
</dbReference>
<dbReference type="Proteomes" id="UP000002698">
    <property type="component" value="Chromosome"/>
</dbReference>
<dbReference type="GO" id="GO:0005737">
    <property type="term" value="C:cytoplasm"/>
    <property type="evidence" value="ECO:0007669"/>
    <property type="project" value="UniProtKB-SubCell"/>
</dbReference>
<dbReference type="GO" id="GO:0004139">
    <property type="term" value="F:deoxyribose-phosphate aldolase activity"/>
    <property type="evidence" value="ECO:0007669"/>
    <property type="project" value="UniProtKB-UniRule"/>
</dbReference>
<dbReference type="GO" id="GO:0006018">
    <property type="term" value="P:2-deoxyribose 1-phosphate catabolic process"/>
    <property type="evidence" value="ECO:0007669"/>
    <property type="project" value="UniProtKB-UniRule"/>
</dbReference>
<dbReference type="GO" id="GO:0016052">
    <property type="term" value="P:carbohydrate catabolic process"/>
    <property type="evidence" value="ECO:0007669"/>
    <property type="project" value="TreeGrafter"/>
</dbReference>
<dbReference type="GO" id="GO:0009264">
    <property type="term" value="P:deoxyribonucleotide catabolic process"/>
    <property type="evidence" value="ECO:0007669"/>
    <property type="project" value="InterPro"/>
</dbReference>
<dbReference type="Gene3D" id="3.20.20.70">
    <property type="entry name" value="Aldolase class I"/>
    <property type="match status" value="1"/>
</dbReference>
<dbReference type="HAMAP" id="MF_00114">
    <property type="entry name" value="DeoC_type1"/>
    <property type="match status" value="1"/>
</dbReference>
<dbReference type="InterPro" id="IPR013785">
    <property type="entry name" value="Aldolase_TIM"/>
</dbReference>
<dbReference type="InterPro" id="IPR011343">
    <property type="entry name" value="DeoC"/>
</dbReference>
<dbReference type="InterPro" id="IPR002915">
    <property type="entry name" value="DeoC/FbaB/LacD_aldolase"/>
</dbReference>
<dbReference type="InterPro" id="IPR028581">
    <property type="entry name" value="DeoC_typeI"/>
</dbReference>
<dbReference type="NCBIfam" id="TIGR00126">
    <property type="entry name" value="deoC"/>
    <property type="match status" value="1"/>
</dbReference>
<dbReference type="PANTHER" id="PTHR10889">
    <property type="entry name" value="DEOXYRIBOSE-PHOSPHATE ALDOLASE"/>
    <property type="match status" value="1"/>
</dbReference>
<dbReference type="PANTHER" id="PTHR10889:SF1">
    <property type="entry name" value="DEOXYRIBOSE-PHOSPHATE ALDOLASE"/>
    <property type="match status" value="1"/>
</dbReference>
<dbReference type="Pfam" id="PF01791">
    <property type="entry name" value="DeoC"/>
    <property type="match status" value="1"/>
</dbReference>
<dbReference type="PIRSF" id="PIRSF001357">
    <property type="entry name" value="DeoC"/>
    <property type="match status" value="1"/>
</dbReference>
<dbReference type="SMART" id="SM01133">
    <property type="entry name" value="DeoC"/>
    <property type="match status" value="1"/>
</dbReference>
<dbReference type="SUPFAM" id="SSF51569">
    <property type="entry name" value="Aldolase"/>
    <property type="match status" value="1"/>
</dbReference>
<sequence>MDRDTFAARIDHTVLGPETAPGDVEAVLDAAAEYGMNACVPPCYVEAASDYAPDVTLVSVCGFPHGQHATETKATEAETVWQAGADEIDVVINVGRLRGGDTDAVRAEIEQVVAAVPVPVKVIVEAPLLSASELRTACELAADADAAYLKTATGFNGDATVAAVETMAEYLPVKASGGIGSFEAAVEMFDAGADRIGASAGAAIVDGFDPAAFET</sequence>
<name>DEOC_NATPD</name>
<protein>
    <recommendedName>
        <fullName evidence="1">Deoxyribose-phosphate aldolase</fullName>
        <shortName evidence="1">DERA</shortName>
        <ecNumber evidence="1">4.1.2.4</ecNumber>
    </recommendedName>
    <alternativeName>
        <fullName evidence="1">2-deoxy-D-ribose 5-phosphate aldolase</fullName>
    </alternativeName>
    <alternativeName>
        <fullName evidence="1">Phosphodeoxyriboaldolase</fullName>
        <shortName evidence="1">Deoxyriboaldolase</shortName>
    </alternativeName>
</protein>
<accession>Q3IQA5</accession>
<organism>
    <name type="scientific">Natronomonas pharaonis (strain ATCC 35678 / DSM 2160 / CIP 103997 / JCM 8858 / NBRC 14720 / NCIMB 2260 / Gabara)</name>
    <name type="common">Halobacterium pharaonis</name>
    <dbReference type="NCBI Taxonomy" id="348780"/>
    <lineage>
        <taxon>Archaea</taxon>
        <taxon>Methanobacteriati</taxon>
        <taxon>Methanobacteriota</taxon>
        <taxon>Stenosarchaea group</taxon>
        <taxon>Halobacteria</taxon>
        <taxon>Halobacteriales</taxon>
        <taxon>Haloarculaceae</taxon>
        <taxon>Natronomonas</taxon>
    </lineage>
</organism>
<proteinExistence type="inferred from homology"/>